<sequence length="314" mass="35156">MVADTHQRGTAKTARNPIKIDLEQSGQLLRKPSWIRVRSPNSQRYQEVKRLLRENKLHTVCEEASCPNIGECFGRGTATFMILGDLCTRRCPFCDVAHGRPHAPDPDEPMHLAKSIAVLKLNYVVITSVDRDDLRDGGAQHFADCIRAIRAQSPQTRIEILVPDFRGRLEIALEKLSACPPDVMNHNLETVPRLYKQCRPGADYVHSLQLLKDFKAASPHIPTKSGLMLGLGETDEEIIGVMQDLRAHQVNMLTIGQYLQPSIGHHPVMRYVSPEDFKTFERIATNLGFSHAACGPMVRSSYHADQQAHEAGIE</sequence>
<evidence type="ECO:0000255" key="1">
    <source>
        <dbReference type="HAMAP-Rule" id="MF_00206"/>
    </source>
</evidence>
<evidence type="ECO:0000255" key="2">
    <source>
        <dbReference type="PROSITE-ProRule" id="PRU01266"/>
    </source>
</evidence>
<accession>Q0AI05</accession>
<dbReference type="EC" id="2.8.1.8" evidence="1"/>
<dbReference type="EMBL" id="CP000450">
    <property type="protein sequence ID" value="ABI59027.1"/>
    <property type="molecule type" value="Genomic_DNA"/>
</dbReference>
<dbReference type="RefSeq" id="WP_011633852.1">
    <property type="nucleotide sequence ID" value="NC_008344.1"/>
</dbReference>
<dbReference type="SMR" id="Q0AI05"/>
<dbReference type="STRING" id="335283.Neut_0757"/>
<dbReference type="KEGG" id="net:Neut_0757"/>
<dbReference type="eggNOG" id="COG0320">
    <property type="taxonomic scope" value="Bacteria"/>
</dbReference>
<dbReference type="HOGENOM" id="CLU_033144_2_1_4"/>
<dbReference type="OrthoDB" id="9787898at2"/>
<dbReference type="UniPathway" id="UPA00538">
    <property type="reaction ID" value="UER00593"/>
</dbReference>
<dbReference type="Proteomes" id="UP000001966">
    <property type="component" value="Chromosome"/>
</dbReference>
<dbReference type="GO" id="GO:0005737">
    <property type="term" value="C:cytoplasm"/>
    <property type="evidence" value="ECO:0007669"/>
    <property type="project" value="UniProtKB-SubCell"/>
</dbReference>
<dbReference type="GO" id="GO:0051539">
    <property type="term" value="F:4 iron, 4 sulfur cluster binding"/>
    <property type="evidence" value="ECO:0007669"/>
    <property type="project" value="UniProtKB-UniRule"/>
</dbReference>
<dbReference type="GO" id="GO:0016992">
    <property type="term" value="F:lipoate synthase activity"/>
    <property type="evidence" value="ECO:0007669"/>
    <property type="project" value="UniProtKB-UniRule"/>
</dbReference>
<dbReference type="GO" id="GO:0046872">
    <property type="term" value="F:metal ion binding"/>
    <property type="evidence" value="ECO:0007669"/>
    <property type="project" value="UniProtKB-KW"/>
</dbReference>
<dbReference type="CDD" id="cd01335">
    <property type="entry name" value="Radical_SAM"/>
    <property type="match status" value="1"/>
</dbReference>
<dbReference type="FunFam" id="3.20.20.70:FF:000023">
    <property type="entry name" value="Lipoyl synthase"/>
    <property type="match status" value="1"/>
</dbReference>
<dbReference type="Gene3D" id="3.20.20.70">
    <property type="entry name" value="Aldolase class I"/>
    <property type="match status" value="1"/>
</dbReference>
<dbReference type="HAMAP" id="MF_00206">
    <property type="entry name" value="Lipoyl_synth"/>
    <property type="match status" value="1"/>
</dbReference>
<dbReference type="InterPro" id="IPR013785">
    <property type="entry name" value="Aldolase_TIM"/>
</dbReference>
<dbReference type="InterPro" id="IPR006638">
    <property type="entry name" value="Elp3/MiaA/NifB-like_rSAM"/>
</dbReference>
<dbReference type="InterPro" id="IPR031691">
    <property type="entry name" value="LIAS_N"/>
</dbReference>
<dbReference type="InterPro" id="IPR003698">
    <property type="entry name" value="Lipoyl_synth"/>
</dbReference>
<dbReference type="InterPro" id="IPR007197">
    <property type="entry name" value="rSAM"/>
</dbReference>
<dbReference type="NCBIfam" id="TIGR00510">
    <property type="entry name" value="lipA"/>
    <property type="match status" value="1"/>
</dbReference>
<dbReference type="NCBIfam" id="NF004019">
    <property type="entry name" value="PRK05481.1"/>
    <property type="match status" value="1"/>
</dbReference>
<dbReference type="NCBIfam" id="NF009544">
    <property type="entry name" value="PRK12928.1"/>
    <property type="match status" value="1"/>
</dbReference>
<dbReference type="PANTHER" id="PTHR10949">
    <property type="entry name" value="LIPOYL SYNTHASE"/>
    <property type="match status" value="1"/>
</dbReference>
<dbReference type="PANTHER" id="PTHR10949:SF0">
    <property type="entry name" value="LIPOYL SYNTHASE, MITOCHONDRIAL"/>
    <property type="match status" value="1"/>
</dbReference>
<dbReference type="Pfam" id="PF16881">
    <property type="entry name" value="LIAS_N"/>
    <property type="match status" value="1"/>
</dbReference>
<dbReference type="Pfam" id="PF04055">
    <property type="entry name" value="Radical_SAM"/>
    <property type="match status" value="1"/>
</dbReference>
<dbReference type="PIRSF" id="PIRSF005963">
    <property type="entry name" value="Lipoyl_synth"/>
    <property type="match status" value="1"/>
</dbReference>
<dbReference type="SFLD" id="SFLDF00271">
    <property type="entry name" value="lipoyl_synthase"/>
    <property type="match status" value="1"/>
</dbReference>
<dbReference type="SFLD" id="SFLDS00029">
    <property type="entry name" value="Radical_SAM"/>
    <property type="match status" value="1"/>
</dbReference>
<dbReference type="SMART" id="SM00729">
    <property type="entry name" value="Elp3"/>
    <property type="match status" value="1"/>
</dbReference>
<dbReference type="SUPFAM" id="SSF102114">
    <property type="entry name" value="Radical SAM enzymes"/>
    <property type="match status" value="1"/>
</dbReference>
<dbReference type="PROSITE" id="PS51918">
    <property type="entry name" value="RADICAL_SAM"/>
    <property type="match status" value="1"/>
</dbReference>
<reference key="1">
    <citation type="journal article" date="2007" name="Environ. Microbiol.">
        <title>Whole-genome analysis of the ammonia-oxidizing bacterium, Nitrosomonas eutropha C91: implications for niche adaptation.</title>
        <authorList>
            <person name="Stein L.Y."/>
            <person name="Arp D.J."/>
            <person name="Berube P.M."/>
            <person name="Chain P.S."/>
            <person name="Hauser L."/>
            <person name="Jetten M.S."/>
            <person name="Klotz M.G."/>
            <person name="Larimer F.W."/>
            <person name="Norton J.M."/>
            <person name="Op den Camp H.J.M."/>
            <person name="Shin M."/>
            <person name="Wei X."/>
        </authorList>
    </citation>
    <scope>NUCLEOTIDE SEQUENCE [LARGE SCALE GENOMIC DNA]</scope>
    <source>
        <strain>DSM 101675 / C91 / Nm57</strain>
    </source>
</reference>
<gene>
    <name evidence="1" type="primary">lipA</name>
    <name type="ordered locus">Neut_0757</name>
</gene>
<comment type="function">
    <text evidence="1">Catalyzes the radical-mediated insertion of two sulfur atoms into the C-6 and C-8 positions of the octanoyl moiety bound to the lipoyl domains of lipoate-dependent enzymes, thereby converting the octanoylated domains into lipoylated derivatives.</text>
</comment>
<comment type="catalytic activity">
    <reaction evidence="1">
        <text>[[Fe-S] cluster scaffold protein carrying a second [4Fe-4S](2+) cluster] + N(6)-octanoyl-L-lysyl-[protein] + 2 oxidized [2Fe-2S]-[ferredoxin] + 2 S-adenosyl-L-methionine + 4 H(+) = [[Fe-S] cluster scaffold protein] + N(6)-[(R)-dihydrolipoyl]-L-lysyl-[protein] + 4 Fe(3+) + 2 hydrogen sulfide + 2 5'-deoxyadenosine + 2 L-methionine + 2 reduced [2Fe-2S]-[ferredoxin]</text>
        <dbReference type="Rhea" id="RHEA:16585"/>
        <dbReference type="Rhea" id="RHEA-COMP:9928"/>
        <dbReference type="Rhea" id="RHEA-COMP:10000"/>
        <dbReference type="Rhea" id="RHEA-COMP:10001"/>
        <dbReference type="Rhea" id="RHEA-COMP:10475"/>
        <dbReference type="Rhea" id="RHEA-COMP:14568"/>
        <dbReference type="Rhea" id="RHEA-COMP:14569"/>
        <dbReference type="ChEBI" id="CHEBI:15378"/>
        <dbReference type="ChEBI" id="CHEBI:17319"/>
        <dbReference type="ChEBI" id="CHEBI:29034"/>
        <dbReference type="ChEBI" id="CHEBI:29919"/>
        <dbReference type="ChEBI" id="CHEBI:33722"/>
        <dbReference type="ChEBI" id="CHEBI:33737"/>
        <dbReference type="ChEBI" id="CHEBI:33738"/>
        <dbReference type="ChEBI" id="CHEBI:57844"/>
        <dbReference type="ChEBI" id="CHEBI:59789"/>
        <dbReference type="ChEBI" id="CHEBI:78809"/>
        <dbReference type="ChEBI" id="CHEBI:83100"/>
        <dbReference type="EC" id="2.8.1.8"/>
    </reaction>
</comment>
<comment type="cofactor">
    <cofactor evidence="1">
        <name>[4Fe-4S] cluster</name>
        <dbReference type="ChEBI" id="CHEBI:49883"/>
    </cofactor>
    <text evidence="1">Binds 2 [4Fe-4S] clusters per subunit. One cluster is coordinated with 3 cysteines and an exchangeable S-adenosyl-L-methionine.</text>
</comment>
<comment type="pathway">
    <text evidence="1">Protein modification; protein lipoylation via endogenous pathway; protein N(6)-(lipoyl)lysine from octanoyl-[acyl-carrier-protein]: step 2/2.</text>
</comment>
<comment type="subcellular location">
    <subcellularLocation>
        <location evidence="1">Cytoplasm</location>
    </subcellularLocation>
</comment>
<comment type="similarity">
    <text evidence="1">Belongs to the radical SAM superfamily. Lipoyl synthase family.</text>
</comment>
<protein>
    <recommendedName>
        <fullName evidence="1">Lipoyl synthase</fullName>
        <ecNumber evidence="1">2.8.1.8</ecNumber>
    </recommendedName>
    <alternativeName>
        <fullName evidence="1">Lip-syn</fullName>
        <shortName evidence="1">LS</shortName>
    </alternativeName>
    <alternativeName>
        <fullName evidence="1">Lipoate synthase</fullName>
    </alternativeName>
    <alternativeName>
        <fullName evidence="1">Lipoic acid synthase</fullName>
    </alternativeName>
    <alternativeName>
        <fullName evidence="1">Sulfur insertion protein LipA</fullName>
    </alternativeName>
</protein>
<feature type="chain" id="PRO_1000012243" description="Lipoyl synthase">
    <location>
        <begin position="1"/>
        <end position="314"/>
    </location>
</feature>
<feature type="domain" description="Radical SAM core" evidence="2">
    <location>
        <begin position="73"/>
        <end position="290"/>
    </location>
</feature>
<feature type="binding site" evidence="1">
    <location>
        <position position="61"/>
    </location>
    <ligand>
        <name>[4Fe-4S] cluster</name>
        <dbReference type="ChEBI" id="CHEBI:49883"/>
        <label>1</label>
    </ligand>
</feature>
<feature type="binding site" evidence="1">
    <location>
        <position position="66"/>
    </location>
    <ligand>
        <name>[4Fe-4S] cluster</name>
        <dbReference type="ChEBI" id="CHEBI:49883"/>
        <label>1</label>
    </ligand>
</feature>
<feature type="binding site" evidence="1">
    <location>
        <position position="72"/>
    </location>
    <ligand>
        <name>[4Fe-4S] cluster</name>
        <dbReference type="ChEBI" id="CHEBI:49883"/>
        <label>1</label>
    </ligand>
</feature>
<feature type="binding site" evidence="1">
    <location>
        <position position="87"/>
    </location>
    <ligand>
        <name>[4Fe-4S] cluster</name>
        <dbReference type="ChEBI" id="CHEBI:49883"/>
        <label>2</label>
        <note>4Fe-4S-S-AdoMet</note>
    </ligand>
</feature>
<feature type="binding site" evidence="1">
    <location>
        <position position="91"/>
    </location>
    <ligand>
        <name>[4Fe-4S] cluster</name>
        <dbReference type="ChEBI" id="CHEBI:49883"/>
        <label>2</label>
        <note>4Fe-4S-S-AdoMet</note>
    </ligand>
</feature>
<feature type="binding site" evidence="1">
    <location>
        <position position="94"/>
    </location>
    <ligand>
        <name>[4Fe-4S] cluster</name>
        <dbReference type="ChEBI" id="CHEBI:49883"/>
        <label>2</label>
        <note>4Fe-4S-S-AdoMet</note>
    </ligand>
</feature>
<feature type="binding site" evidence="1">
    <location>
        <position position="301"/>
    </location>
    <ligand>
        <name>[4Fe-4S] cluster</name>
        <dbReference type="ChEBI" id="CHEBI:49883"/>
        <label>1</label>
    </ligand>
</feature>
<name>LIPA_NITEC</name>
<keyword id="KW-0004">4Fe-4S</keyword>
<keyword id="KW-0963">Cytoplasm</keyword>
<keyword id="KW-0408">Iron</keyword>
<keyword id="KW-0411">Iron-sulfur</keyword>
<keyword id="KW-0479">Metal-binding</keyword>
<keyword id="KW-0949">S-adenosyl-L-methionine</keyword>
<keyword id="KW-0808">Transferase</keyword>
<organism>
    <name type="scientific">Nitrosomonas eutropha (strain DSM 101675 / C91 / Nm57)</name>
    <dbReference type="NCBI Taxonomy" id="335283"/>
    <lineage>
        <taxon>Bacteria</taxon>
        <taxon>Pseudomonadati</taxon>
        <taxon>Pseudomonadota</taxon>
        <taxon>Betaproteobacteria</taxon>
        <taxon>Nitrosomonadales</taxon>
        <taxon>Nitrosomonadaceae</taxon>
        <taxon>Nitrosomonas</taxon>
    </lineage>
</organism>
<proteinExistence type="inferred from homology"/>